<comment type="subcellular location">
    <subcellularLocation>
        <location evidence="4">Membrane</location>
        <topology evidence="4">Single-pass type I membrane protein</topology>
    </subcellularLocation>
</comment>
<comment type="similarity">
    <text evidence="4">Belongs to the prespore-cell-inducing factor family.</text>
</comment>
<feature type="signal peptide" evidence="1">
    <location>
        <begin position="1"/>
        <end position="20"/>
    </location>
</feature>
<feature type="chain" id="PRO_0000327546" description="Protein psiH">
    <location>
        <begin position="21"/>
        <end position="715"/>
    </location>
</feature>
<feature type="topological domain" description="Extracellular" evidence="1">
    <location>
        <begin position="21"/>
        <end position="651"/>
    </location>
</feature>
<feature type="transmembrane region" description="Helical" evidence="1">
    <location>
        <begin position="652"/>
        <end position="672"/>
    </location>
</feature>
<feature type="topological domain" description="Cytoplasmic" evidence="1">
    <location>
        <begin position="673"/>
        <end position="715"/>
    </location>
</feature>
<feature type="domain" description="PA14" evidence="2">
    <location>
        <begin position="115"/>
        <end position="256"/>
    </location>
</feature>
<feature type="region of interest" description="Disordered" evidence="3">
    <location>
        <begin position="690"/>
        <end position="715"/>
    </location>
</feature>
<feature type="glycosylation site" description="N-linked (GlcNAc...) asparagine" evidence="1">
    <location>
        <position position="149"/>
    </location>
</feature>
<feature type="glycosylation site" description="N-linked (GlcNAc...) asparagine" evidence="1">
    <location>
        <position position="377"/>
    </location>
</feature>
<feature type="glycosylation site" description="N-linked (GlcNAc...) asparagine" evidence="1">
    <location>
        <position position="528"/>
    </location>
</feature>
<feature type="glycosylation site" description="N-linked (GlcNAc...) asparagine" evidence="1">
    <location>
        <position position="622"/>
    </location>
</feature>
<dbReference type="EMBL" id="U67940">
    <property type="protein sequence ID" value="AAB07590.1"/>
    <property type="molecule type" value="mRNA"/>
</dbReference>
<dbReference type="EMBL" id="AAFI02000140">
    <property type="protein sequence ID" value="EAL62724.1"/>
    <property type="molecule type" value="Genomic_DNA"/>
</dbReference>
<dbReference type="RefSeq" id="XP_636250.1">
    <property type="nucleotide sequence ID" value="XM_631158.1"/>
</dbReference>
<dbReference type="SMR" id="Q94494"/>
<dbReference type="FunCoup" id="Q94494">
    <property type="interactions" value="20"/>
</dbReference>
<dbReference type="STRING" id="44689.Q94494"/>
<dbReference type="GlyCosmos" id="Q94494">
    <property type="glycosylation" value="4 sites, No reported glycans"/>
</dbReference>
<dbReference type="GlyGen" id="Q94494">
    <property type="glycosylation" value="4 sites"/>
</dbReference>
<dbReference type="PaxDb" id="44689-DDB0191422"/>
<dbReference type="EnsemblProtists" id="EAL62724">
    <property type="protein sequence ID" value="EAL62724"/>
    <property type="gene ID" value="DDB_G0289393"/>
</dbReference>
<dbReference type="GeneID" id="8627140"/>
<dbReference type="KEGG" id="ddi:DDB_G0289393"/>
<dbReference type="dictyBase" id="DDB_G0289393">
    <property type="gene designation" value="psiH"/>
</dbReference>
<dbReference type="VEuPathDB" id="AmoebaDB:DDB_G0289393"/>
<dbReference type="eggNOG" id="ENOG502REBK">
    <property type="taxonomic scope" value="Eukaryota"/>
</dbReference>
<dbReference type="HOGENOM" id="CLU_024170_0_0_1"/>
<dbReference type="InParanoid" id="Q94494"/>
<dbReference type="OMA" id="SASECNC"/>
<dbReference type="PhylomeDB" id="Q94494"/>
<dbReference type="PRO" id="PR:Q94494"/>
<dbReference type="Proteomes" id="UP000002195">
    <property type="component" value="Chromosome 5"/>
</dbReference>
<dbReference type="GO" id="GO:0005576">
    <property type="term" value="C:extracellular region"/>
    <property type="evidence" value="ECO:0000318"/>
    <property type="project" value="GO_Central"/>
</dbReference>
<dbReference type="GO" id="GO:0016020">
    <property type="term" value="C:membrane"/>
    <property type="evidence" value="ECO:0007669"/>
    <property type="project" value="UniProtKB-SubCell"/>
</dbReference>
<dbReference type="InterPro" id="IPR011874">
    <property type="entry name" value="Fibro_Slime"/>
</dbReference>
<dbReference type="InterPro" id="IPR037524">
    <property type="entry name" value="PA14/GLEYA"/>
</dbReference>
<dbReference type="InterPro" id="IPR011658">
    <property type="entry name" value="PA14_dom"/>
</dbReference>
<dbReference type="InterPro" id="IPR051154">
    <property type="entry name" value="Prespore-cell_inducing_factor"/>
</dbReference>
<dbReference type="NCBIfam" id="TIGR02148">
    <property type="entry name" value="Fibro_Slime"/>
    <property type="match status" value="1"/>
</dbReference>
<dbReference type="PANTHER" id="PTHR31137">
    <property type="entry name" value="PROTEIN PSIB-RELATED-RELATED"/>
    <property type="match status" value="1"/>
</dbReference>
<dbReference type="PANTHER" id="PTHR31137:SF31">
    <property type="entry name" value="PROTEIN PSIH-RELATED"/>
    <property type="match status" value="1"/>
</dbReference>
<dbReference type="Pfam" id="PF07691">
    <property type="entry name" value="PA14"/>
    <property type="match status" value="1"/>
</dbReference>
<dbReference type="SMART" id="SM00758">
    <property type="entry name" value="PA14"/>
    <property type="match status" value="1"/>
</dbReference>
<dbReference type="PROSITE" id="PS51820">
    <property type="entry name" value="PA14"/>
    <property type="match status" value="1"/>
</dbReference>
<sequence>MNYLKPTIFLILCLVTFVYSQPSTLTIQGTIFDQHPDYNNNFEPKGGSIKKNLVLKTLGSSKVPTLVSLDPEDDTNEDGRMITPSLFQYFYQTSSKPLTKNSGANVPIPINLVLNYDSKKQVYVYNDQYFFPIDYQGFDVDSKYRTYNNGSGYHNFHFCLKLNTKFTYQGIEDFYFIGDDDVWVFINNKLVVDLGGLHSRETGSVDVTKLGLTKGSTYDFDFFYCERHTTASTIRIETNLQVFCPWYDYCGVCSGDGSTCCNKDTTCNDGKKCTIDACPPPKTVINKAGSKITDADIAPYCSHTDVSCPDPDLCNNNNCDASTGNCKTTPITCSNQDSKCLLAQTCDPKSGCIYKSKCTGVCDTGVCDGGDCVQKSNSTCANELGNNPCMVYSCGKNGCEAKPKCPQNPSTPCDVAYCDAGECKVQHLSASECNCGCDASDLCSKNNCVNNVCVPLPIDGIDDGNACTKDTCVNGNIFHTPINKCSGCMTCNPVSGNCDLSDTVCQDGNECTTNVCESSDSVLGVCTNSTVECGATNTDKCIQFSCNEATGCQQSAVVCPDVGSCLVGYCDSKQGCLTKPRSCDTGVFCLTGECIENAGGCIVYEKRCDADNGRCQQGVCVNNTATEEGYCKSEDYDPLPFICKTGAVVSTAVIAGVTVAGAVALGVFIYGGKRGYDYWKESRNVQFSGSNSNPLYEQNPNGSGVNPLYNDNSAL</sequence>
<protein>
    <recommendedName>
        <fullName>Protein psiH</fullName>
    </recommendedName>
</protein>
<keyword id="KW-0325">Glycoprotein</keyword>
<keyword id="KW-0472">Membrane</keyword>
<keyword id="KW-1185">Reference proteome</keyword>
<keyword id="KW-0732">Signal</keyword>
<keyword id="KW-0812">Transmembrane</keyword>
<keyword id="KW-1133">Transmembrane helix</keyword>
<evidence type="ECO:0000255" key="1"/>
<evidence type="ECO:0000255" key="2">
    <source>
        <dbReference type="PROSITE-ProRule" id="PRU01164"/>
    </source>
</evidence>
<evidence type="ECO:0000256" key="3">
    <source>
        <dbReference type="SAM" id="MobiDB-lite"/>
    </source>
</evidence>
<evidence type="ECO:0000305" key="4"/>
<name>PSIH_DICDI</name>
<proteinExistence type="evidence at transcript level"/>
<gene>
    <name type="primary">psiH</name>
    <name type="synonym">rcdGG</name>
    <name type="ORF">DDB_G0289393</name>
</gene>
<reference key="1">
    <citation type="journal article" date="1996" name="Proc. Natl. Acad. Sci. U.S.A.">
        <title>Ordered yeast artificial chromosome clones representing the Dictyostelium discoideum genome.</title>
        <authorList>
            <person name="Kuspa A."/>
            <person name="Loomis W.F."/>
        </authorList>
    </citation>
    <scope>NUCLEOTIDE SEQUENCE [LARGE SCALE MRNA]</scope>
    <source>
        <strain>AX4</strain>
    </source>
</reference>
<reference key="2">
    <citation type="journal article" date="2005" name="Nature">
        <title>The genome of the social amoeba Dictyostelium discoideum.</title>
        <authorList>
            <person name="Eichinger L."/>
            <person name="Pachebat J.A."/>
            <person name="Gloeckner G."/>
            <person name="Rajandream M.A."/>
            <person name="Sucgang R."/>
            <person name="Berriman M."/>
            <person name="Song J."/>
            <person name="Olsen R."/>
            <person name="Szafranski K."/>
            <person name="Xu Q."/>
            <person name="Tunggal B."/>
            <person name="Kummerfeld S."/>
            <person name="Madera M."/>
            <person name="Konfortov B.A."/>
            <person name="Rivero F."/>
            <person name="Bankier A.T."/>
            <person name="Lehmann R."/>
            <person name="Hamlin N."/>
            <person name="Davies R."/>
            <person name="Gaudet P."/>
            <person name="Fey P."/>
            <person name="Pilcher K."/>
            <person name="Chen G."/>
            <person name="Saunders D."/>
            <person name="Sodergren E.J."/>
            <person name="Davis P."/>
            <person name="Kerhornou A."/>
            <person name="Nie X."/>
            <person name="Hall N."/>
            <person name="Anjard C."/>
            <person name="Hemphill L."/>
            <person name="Bason N."/>
            <person name="Farbrother P."/>
            <person name="Desany B."/>
            <person name="Just E."/>
            <person name="Morio T."/>
            <person name="Rost R."/>
            <person name="Churcher C.M."/>
            <person name="Cooper J."/>
            <person name="Haydock S."/>
            <person name="van Driessche N."/>
            <person name="Cronin A."/>
            <person name="Goodhead I."/>
            <person name="Muzny D.M."/>
            <person name="Mourier T."/>
            <person name="Pain A."/>
            <person name="Lu M."/>
            <person name="Harper D."/>
            <person name="Lindsay R."/>
            <person name="Hauser H."/>
            <person name="James K.D."/>
            <person name="Quiles M."/>
            <person name="Madan Babu M."/>
            <person name="Saito T."/>
            <person name="Buchrieser C."/>
            <person name="Wardroper A."/>
            <person name="Felder M."/>
            <person name="Thangavelu M."/>
            <person name="Johnson D."/>
            <person name="Knights A."/>
            <person name="Loulseged H."/>
            <person name="Mungall K.L."/>
            <person name="Oliver K."/>
            <person name="Price C."/>
            <person name="Quail M.A."/>
            <person name="Urushihara H."/>
            <person name="Hernandez J."/>
            <person name="Rabbinowitsch E."/>
            <person name="Steffen D."/>
            <person name="Sanders M."/>
            <person name="Ma J."/>
            <person name="Kohara Y."/>
            <person name="Sharp S."/>
            <person name="Simmonds M.N."/>
            <person name="Spiegler S."/>
            <person name="Tivey A."/>
            <person name="Sugano S."/>
            <person name="White B."/>
            <person name="Walker D."/>
            <person name="Woodward J.R."/>
            <person name="Winckler T."/>
            <person name="Tanaka Y."/>
            <person name="Shaulsky G."/>
            <person name="Schleicher M."/>
            <person name="Weinstock G.M."/>
            <person name="Rosenthal A."/>
            <person name="Cox E.C."/>
            <person name="Chisholm R.L."/>
            <person name="Gibbs R.A."/>
            <person name="Loomis W.F."/>
            <person name="Platzer M."/>
            <person name="Kay R.R."/>
            <person name="Williams J.G."/>
            <person name="Dear P.H."/>
            <person name="Noegel A.A."/>
            <person name="Barrell B.G."/>
            <person name="Kuspa A."/>
        </authorList>
    </citation>
    <scope>NUCLEOTIDE SEQUENCE [LARGE SCALE GENOMIC DNA]</scope>
    <source>
        <strain>AX4</strain>
    </source>
</reference>
<accession>Q94494</accession>
<accession>Q54HI3</accession>
<organism>
    <name type="scientific">Dictyostelium discoideum</name>
    <name type="common">Social amoeba</name>
    <dbReference type="NCBI Taxonomy" id="44689"/>
    <lineage>
        <taxon>Eukaryota</taxon>
        <taxon>Amoebozoa</taxon>
        <taxon>Evosea</taxon>
        <taxon>Eumycetozoa</taxon>
        <taxon>Dictyostelia</taxon>
        <taxon>Dictyosteliales</taxon>
        <taxon>Dictyosteliaceae</taxon>
        <taxon>Dictyostelium</taxon>
    </lineage>
</organism>